<feature type="chain" id="PRO_0000148723" description="Trk system potassium uptake protein trkA homolog 1">
    <location>
        <begin position="1"/>
        <end position="406"/>
    </location>
</feature>
<feature type="domain" description="RCK N-terminal 1" evidence="3">
    <location>
        <begin position="1"/>
        <end position="124"/>
    </location>
</feature>
<feature type="domain" description="RCK C-terminal" evidence="4">
    <location>
        <begin position="144"/>
        <end position="225"/>
    </location>
</feature>
<feature type="domain" description="RCK N-terminal 2" evidence="3">
    <location>
        <begin position="230"/>
        <end position="348"/>
    </location>
</feature>
<feature type="binding site" description="in other chain" evidence="1">
    <location>
        <begin position="7"/>
        <end position="11"/>
    </location>
    <ligand>
        <name>NAD(+)</name>
        <dbReference type="ChEBI" id="CHEBI:57540"/>
        <label>1</label>
        <note>ligand shared between dimeric partners</note>
    </ligand>
</feature>
<feature type="binding site" description="in other chain" evidence="1">
    <location>
        <position position="29"/>
    </location>
    <ligand>
        <name>NAD(+)</name>
        <dbReference type="ChEBI" id="CHEBI:57540"/>
        <label>1</label>
        <note>ligand shared between dimeric partners</note>
    </ligand>
</feature>
<feature type="binding site" description="in other chain" evidence="1">
    <location>
        <begin position="70"/>
        <end position="71"/>
    </location>
    <ligand>
        <name>NAD(+)</name>
        <dbReference type="ChEBI" id="CHEBI:57540"/>
        <label>1</label>
        <note>ligand shared between dimeric partners</note>
    </ligand>
</feature>
<feature type="binding site" evidence="1">
    <location>
        <position position="101"/>
    </location>
    <ligand>
        <name>NAD(+)</name>
        <dbReference type="ChEBI" id="CHEBI:57540"/>
        <label>1</label>
        <note>ligand shared between dimeric partners</note>
    </ligand>
</feature>
<feature type="binding site" evidence="2">
    <location>
        <begin position="232"/>
        <end position="262"/>
    </location>
    <ligand>
        <name>NAD(+)</name>
        <dbReference type="ChEBI" id="CHEBI:57540"/>
        <label>2</label>
    </ligand>
</feature>
<accession>P0CW16</accession>
<accession>P39449</accession>
<evidence type="ECO:0000250" key="1"/>
<evidence type="ECO:0000255" key="2"/>
<evidence type="ECO:0000255" key="3">
    <source>
        <dbReference type="PROSITE-ProRule" id="PRU00543"/>
    </source>
</evidence>
<evidence type="ECO:0000255" key="4">
    <source>
        <dbReference type="PROSITE-ProRule" id="PRU00544"/>
    </source>
</evidence>
<reference key="1">
    <citation type="journal article" date="1993" name="Biochim. Biophys. Acta">
        <title>An archaeal trkA homolog near dnaK and dnaJ.</title>
        <authorList>
            <person name="Macario A.J.L."/>
            <person name="Dugan C.B."/>
            <person name="Conway de Macario E."/>
        </authorList>
    </citation>
    <scope>NUCLEOTIDE SEQUENCE [GENOMIC DNA]</scope>
    <source>
        <strain>S-6</strain>
    </source>
</reference>
<comment type="function">
    <text evidence="1">Part of a potassium transport system.</text>
</comment>
<comment type="domain">
    <text evidence="1">The RCK N-terminal domain binds NAD and possibly other effectors. This is expected to cause a conformation change that regulates potassium transport (By similarity).</text>
</comment>
<name>TRKA1_METMZ</name>
<keyword id="KW-0406">Ion transport</keyword>
<keyword id="KW-0520">NAD</keyword>
<keyword id="KW-0630">Potassium</keyword>
<keyword id="KW-0633">Potassium transport</keyword>
<keyword id="KW-0677">Repeat</keyword>
<keyword id="KW-0813">Transport</keyword>
<protein>
    <recommendedName>
        <fullName>Trk system potassium uptake protein trkA homolog 1</fullName>
        <shortName>K(+)-uptake protein trkA homolog 1</shortName>
    </recommendedName>
</protein>
<gene>
    <name type="primary">trkA1</name>
    <name type="synonym">trkA</name>
</gene>
<proteinExistence type="inferred from homology"/>
<sequence length="406" mass="44059">MKAVIIGAGEVGYHIAKALSPKNDVVIIDKDEEAAKRADELDVLVIEGNGANAEILSRVLQNADLLVAVTGVDEVNIVACMTAKLIMKNKNGWKDTKTIARVSNPDYIDSPVTSRAQVGVDLMICPELALASEVADILSSPSAIDAEMFAEGKVRMTEFAISPESKLVGKHMQDLKLADCCIVSAVFREDQIIIPHGDDLIKANDHMVVVGKPESMEDLESVFGSKVSHRTRILLIGCGIVGMYLAKLIDKEENADLRIIEHSKSRCIEVAEILENALVLNGDGTDVSLLREENIEDMDVVVAVTDSDEKNLLCSLLAKQLGAKKVIARADRSDYLPLFEMVGIDMAVSPREATVNEVLKLTMGRGIQTLTTIEGERAEIIEYTASEKSRIVGKPLNKVKFPKGAP</sequence>
<organism>
    <name type="scientific">Methanosarcina mazei</name>
    <name type="common">Methanosarcina frisia</name>
    <dbReference type="NCBI Taxonomy" id="2209"/>
    <lineage>
        <taxon>Archaea</taxon>
        <taxon>Methanobacteriati</taxon>
        <taxon>Methanobacteriota</taxon>
        <taxon>Stenosarchaea group</taxon>
        <taxon>Methanomicrobia</taxon>
        <taxon>Methanosarcinales</taxon>
        <taxon>Methanosarcinaceae</taxon>
        <taxon>Methanosarcina</taxon>
    </lineage>
</organism>
<dbReference type="EMBL" id="X74307">
    <property type="protein sequence ID" value="CAA52360.1"/>
    <property type="molecule type" value="Genomic_DNA"/>
</dbReference>
<dbReference type="PIR" id="S39806">
    <property type="entry name" value="S39806"/>
</dbReference>
<dbReference type="SMR" id="P0CW16"/>
<dbReference type="GO" id="GO:0005886">
    <property type="term" value="C:plasma membrane"/>
    <property type="evidence" value="ECO:0007669"/>
    <property type="project" value="InterPro"/>
</dbReference>
<dbReference type="GO" id="GO:0015079">
    <property type="term" value="F:potassium ion transmembrane transporter activity"/>
    <property type="evidence" value="ECO:0007669"/>
    <property type="project" value="InterPro"/>
</dbReference>
<dbReference type="FunFam" id="3.40.50.720:FF:000675">
    <property type="entry name" value="Trk system potassium uptake protein TrkA"/>
    <property type="match status" value="1"/>
</dbReference>
<dbReference type="FunFam" id="3.40.50.720:FF:000707">
    <property type="entry name" value="Trk system potassium uptake protein TrkA"/>
    <property type="match status" value="1"/>
</dbReference>
<dbReference type="Gene3D" id="3.40.50.720">
    <property type="entry name" value="NAD(P)-binding Rossmann-like Domain"/>
    <property type="match status" value="2"/>
</dbReference>
<dbReference type="Gene3D" id="3.30.70.1450">
    <property type="entry name" value="Regulator of K+ conductance, C-terminal domain"/>
    <property type="match status" value="1"/>
</dbReference>
<dbReference type="InterPro" id="IPR006036">
    <property type="entry name" value="K_uptake_TrkA"/>
</dbReference>
<dbReference type="InterPro" id="IPR036291">
    <property type="entry name" value="NAD(P)-bd_dom_sf"/>
</dbReference>
<dbReference type="InterPro" id="IPR006037">
    <property type="entry name" value="RCK_C"/>
</dbReference>
<dbReference type="InterPro" id="IPR036721">
    <property type="entry name" value="RCK_C_sf"/>
</dbReference>
<dbReference type="InterPro" id="IPR003148">
    <property type="entry name" value="RCK_N"/>
</dbReference>
<dbReference type="InterPro" id="IPR050721">
    <property type="entry name" value="Trk_Ktr_HKT_K-transport"/>
</dbReference>
<dbReference type="NCBIfam" id="NF007031">
    <property type="entry name" value="PRK09496.1-2"/>
    <property type="match status" value="1"/>
</dbReference>
<dbReference type="NCBIfam" id="NF007034">
    <property type="entry name" value="PRK09496.2-1"/>
    <property type="match status" value="1"/>
</dbReference>
<dbReference type="NCBIfam" id="NF007036">
    <property type="entry name" value="PRK09496.2-3"/>
    <property type="match status" value="1"/>
</dbReference>
<dbReference type="NCBIfam" id="NF007039">
    <property type="entry name" value="PRK09496.3-2"/>
    <property type="match status" value="1"/>
</dbReference>
<dbReference type="NCBIfam" id="NF007041">
    <property type="entry name" value="PRK09496.3-4"/>
    <property type="match status" value="1"/>
</dbReference>
<dbReference type="PANTHER" id="PTHR43833">
    <property type="entry name" value="POTASSIUM CHANNEL PROTEIN 2-RELATED-RELATED"/>
    <property type="match status" value="1"/>
</dbReference>
<dbReference type="PANTHER" id="PTHR43833:SF5">
    <property type="entry name" value="TRK SYSTEM POTASSIUM UPTAKE PROTEIN TRKA"/>
    <property type="match status" value="1"/>
</dbReference>
<dbReference type="Pfam" id="PF02080">
    <property type="entry name" value="TrkA_C"/>
    <property type="match status" value="1"/>
</dbReference>
<dbReference type="Pfam" id="PF02254">
    <property type="entry name" value="TrkA_N"/>
    <property type="match status" value="2"/>
</dbReference>
<dbReference type="PRINTS" id="PR00335">
    <property type="entry name" value="KUPTAKETRKA"/>
</dbReference>
<dbReference type="SUPFAM" id="SSF51735">
    <property type="entry name" value="NAD(P)-binding Rossmann-fold domains"/>
    <property type="match status" value="2"/>
</dbReference>
<dbReference type="SUPFAM" id="SSF116726">
    <property type="entry name" value="TrkA C-terminal domain-like"/>
    <property type="match status" value="1"/>
</dbReference>
<dbReference type="PROSITE" id="PS51202">
    <property type="entry name" value="RCK_C"/>
    <property type="match status" value="1"/>
</dbReference>
<dbReference type="PROSITE" id="PS51201">
    <property type="entry name" value="RCK_N"/>
    <property type="match status" value="2"/>
</dbReference>